<reference key="1">
    <citation type="journal article" date="1996" name="Science">
        <title>Complete genome sequence of the methanogenic archaeon, Methanococcus jannaschii.</title>
        <authorList>
            <person name="Bult C.J."/>
            <person name="White O."/>
            <person name="Olsen G.J."/>
            <person name="Zhou L."/>
            <person name="Fleischmann R.D."/>
            <person name="Sutton G.G."/>
            <person name="Blake J.A."/>
            <person name="FitzGerald L.M."/>
            <person name="Clayton R.A."/>
            <person name="Gocayne J.D."/>
            <person name="Kerlavage A.R."/>
            <person name="Dougherty B.A."/>
            <person name="Tomb J.-F."/>
            <person name="Adams M.D."/>
            <person name="Reich C.I."/>
            <person name="Overbeek R."/>
            <person name="Kirkness E.F."/>
            <person name="Weinstock K.G."/>
            <person name="Merrick J.M."/>
            <person name="Glodek A."/>
            <person name="Scott J.L."/>
            <person name="Geoghagen N.S.M."/>
            <person name="Weidman J.F."/>
            <person name="Fuhrmann J.L."/>
            <person name="Nguyen D."/>
            <person name="Utterback T.R."/>
            <person name="Kelley J.M."/>
            <person name="Peterson J.D."/>
            <person name="Sadow P.W."/>
            <person name="Hanna M.C."/>
            <person name="Cotton M.D."/>
            <person name="Roberts K.M."/>
            <person name="Hurst M.A."/>
            <person name="Kaine B.P."/>
            <person name="Borodovsky M."/>
            <person name="Klenk H.-P."/>
            <person name="Fraser C.M."/>
            <person name="Smith H.O."/>
            <person name="Woese C.R."/>
            <person name="Venter J.C."/>
        </authorList>
    </citation>
    <scope>NUCLEOTIDE SEQUENCE [LARGE SCALE GENOMIC DNA]</scope>
    <source>
        <strain>ATCC 43067 / DSM 2661 / JAL-1 / JCM 10045 / NBRC 100440</strain>
    </source>
</reference>
<dbReference type="EMBL" id="L77117">
    <property type="protein sequence ID" value="AAB99309.1"/>
    <property type="molecule type" value="Genomic_DNA"/>
</dbReference>
<dbReference type="PIR" id="D64461">
    <property type="entry name" value="D64461"/>
</dbReference>
<dbReference type="RefSeq" id="WP_010870810.1">
    <property type="nucleotide sequence ID" value="NC_000909.1"/>
</dbReference>
<dbReference type="SMR" id="Q58689"/>
<dbReference type="STRING" id="243232.MJ_1293"/>
<dbReference type="PaxDb" id="243232-MJ_1293"/>
<dbReference type="EnsemblBacteria" id="AAB99309">
    <property type="protein sequence ID" value="AAB99309"/>
    <property type="gene ID" value="MJ_1293"/>
</dbReference>
<dbReference type="GeneID" id="71696691"/>
<dbReference type="KEGG" id="mja:MJ_1293"/>
<dbReference type="eggNOG" id="arCOG05057">
    <property type="taxonomic scope" value="Archaea"/>
</dbReference>
<dbReference type="HOGENOM" id="CLU_1197645_0_0_2"/>
<dbReference type="InParanoid" id="Q58689"/>
<dbReference type="Proteomes" id="UP000000805">
    <property type="component" value="Chromosome"/>
</dbReference>
<dbReference type="GO" id="GO:0016020">
    <property type="term" value="C:membrane"/>
    <property type="evidence" value="ECO:0007669"/>
    <property type="project" value="UniProtKB-SubCell"/>
</dbReference>
<keyword id="KW-0472">Membrane</keyword>
<keyword id="KW-1185">Reference proteome</keyword>
<keyword id="KW-0812">Transmembrane</keyword>
<keyword id="KW-1133">Transmembrane helix</keyword>
<gene>
    <name type="ordered locus">MJ1293</name>
</gene>
<accession>Q58689</accession>
<feature type="chain" id="PRO_0000107260" description="Uncharacterized protein MJ1293">
    <location>
        <begin position="1"/>
        <end position="231"/>
    </location>
</feature>
<feature type="transmembrane region" description="Helical" evidence="1">
    <location>
        <begin position="86"/>
        <end position="106"/>
    </location>
</feature>
<organism>
    <name type="scientific">Methanocaldococcus jannaschii (strain ATCC 43067 / DSM 2661 / JAL-1 / JCM 10045 / NBRC 100440)</name>
    <name type="common">Methanococcus jannaschii</name>
    <dbReference type="NCBI Taxonomy" id="243232"/>
    <lineage>
        <taxon>Archaea</taxon>
        <taxon>Methanobacteriati</taxon>
        <taxon>Methanobacteriota</taxon>
        <taxon>Methanomada group</taxon>
        <taxon>Methanococci</taxon>
        <taxon>Methanococcales</taxon>
        <taxon>Methanocaldococcaceae</taxon>
        <taxon>Methanocaldococcus</taxon>
    </lineage>
</organism>
<sequence length="231" mass="26686">MTNKTRKETNEIKNNITLPPNIKTEVNRTSKYDFTNLSKDLEIVYALIKITGFDEYLPFNIENLNKIFIKEKISPYPYLLNLIKDLIILFVIGLIITIIGLLMYEPTRPKVISIIASILYKLKIKEKPKPKKKETIKLPKPPKIYISDVIYSLGDTVRIEISSEIDIGNNLYILSPTNKKYKIELIKTGKNKYLGLFKIPENEVPGQYFIIYKPENLSIGGFLVVDIKKEM</sequence>
<protein>
    <recommendedName>
        <fullName>Uncharacterized protein MJ1293</fullName>
    </recommendedName>
</protein>
<evidence type="ECO:0000255" key="1"/>
<evidence type="ECO:0000305" key="2"/>
<proteinExistence type="predicted"/>
<name>Y1293_METJA</name>
<comment type="subcellular location">
    <subcellularLocation>
        <location evidence="2">Membrane</location>
        <topology evidence="2">Single-pass membrane protein</topology>
    </subcellularLocation>
</comment>